<keyword id="KW-0009">Actin-binding</keyword>
<keyword id="KW-0965">Cell junction</keyword>
<keyword id="KW-0966">Cell projection</keyword>
<keyword id="KW-0963">Cytoplasm</keyword>
<keyword id="KW-0206">Cytoskeleton</keyword>
<keyword id="KW-1015">Disulfide bond</keyword>
<keyword id="KW-0393">Immunoglobulin domain</keyword>
<keyword id="KW-0597">Phosphoprotein</keyword>
<keyword id="KW-1185">Reference proteome</keyword>
<keyword id="KW-0677">Repeat</keyword>
<feature type="chain" id="PRO_0000302722" description="Palladin">
    <location>
        <begin position="1" status="less than"/>
        <end position="603" status="greater than"/>
    </location>
</feature>
<feature type="domain" description="Ig-like C2-type 1">
    <location>
        <begin position="278"/>
        <end position="362"/>
    </location>
</feature>
<feature type="domain" description="Ig-like C2-type 2">
    <location>
        <begin position="412"/>
        <end position="503"/>
    </location>
</feature>
<feature type="domain" description="Ig-like C2-type 3">
    <location>
        <begin position="511"/>
        <end position="601"/>
    </location>
</feature>
<feature type="region of interest" description="Interaction with VASP" evidence="1">
    <location>
        <begin position="63"/>
        <end position="67"/>
    </location>
</feature>
<feature type="region of interest" description="Disordered" evidence="5">
    <location>
        <begin position="134"/>
        <end position="156"/>
    </location>
</feature>
<feature type="region of interest" description="Disordered" evidence="5">
    <location>
        <begin position="373"/>
        <end position="402"/>
    </location>
</feature>
<feature type="region of interest" description="Interaction with EZR" evidence="1">
    <location>
        <begin position="414"/>
        <end position="503"/>
    </location>
</feature>
<feature type="region of interest" description="Interaction with EZR" evidence="1">
    <location>
        <begin position="513"/>
        <end position="603"/>
    </location>
</feature>
<feature type="modified residue" description="Phosphoserine" evidence="15">
    <location>
        <position position="133"/>
    </location>
</feature>
<feature type="modified residue" description="Phosphothreonine" evidence="3">
    <location>
        <position position="136"/>
    </location>
</feature>
<feature type="modified residue" description="Phosphoserine" evidence="2">
    <location>
        <position position="142"/>
    </location>
</feature>
<feature type="modified residue" description="Phosphoserine" evidence="15">
    <location>
        <position position="170"/>
    </location>
</feature>
<feature type="modified residue" description="Phosphoserine" evidence="2">
    <location>
        <position position="256"/>
    </location>
</feature>
<feature type="modified residue" description="Phosphoserine" evidence="2">
    <location>
        <position position="261"/>
    </location>
</feature>
<feature type="modified residue" description="Phosphoserine" evidence="2">
    <location>
        <position position="378"/>
    </location>
</feature>
<feature type="modified residue" description="Phosphoserine" evidence="2">
    <location>
        <position position="381"/>
    </location>
</feature>
<feature type="modified residue" description="Phosphoserine" evidence="15">
    <location>
        <position position="393"/>
    </location>
</feature>
<feature type="modified residue" description="Phosphoserine; by PKB/AKT1" evidence="2">
    <location>
        <position position="395"/>
    </location>
</feature>
<feature type="modified residue" description="Phosphoserine" evidence="15">
    <location>
        <position position="398"/>
    </location>
</feature>
<feature type="disulfide bond" evidence="4">
    <location>
        <begin position="433"/>
        <end position="485"/>
    </location>
</feature>
<feature type="non-terminal residue">
    <location>
        <position position="1"/>
    </location>
</feature>
<feature type="non-terminal residue">
    <location>
        <position position="603"/>
    </location>
</feature>
<evidence type="ECO:0000250" key="1"/>
<evidence type="ECO:0000250" key="2">
    <source>
        <dbReference type="UniProtKB" id="Q8WX93"/>
    </source>
</evidence>
<evidence type="ECO:0000250" key="3">
    <source>
        <dbReference type="UniProtKB" id="Q9ET54"/>
    </source>
</evidence>
<evidence type="ECO:0000255" key="4">
    <source>
        <dbReference type="PROSITE-ProRule" id="PRU00114"/>
    </source>
</evidence>
<evidence type="ECO:0000256" key="5">
    <source>
        <dbReference type="SAM" id="MobiDB-lite"/>
    </source>
</evidence>
<evidence type="ECO:0000269" key="6">
    <source>
    </source>
</evidence>
<evidence type="ECO:0000269" key="7">
    <source>
    </source>
</evidence>
<evidence type="ECO:0000269" key="8">
    <source>
    </source>
</evidence>
<evidence type="ECO:0000269" key="9">
    <source>
    </source>
</evidence>
<evidence type="ECO:0000269" key="10">
    <source>
    </source>
</evidence>
<evidence type="ECO:0000269" key="11">
    <source>
    </source>
</evidence>
<evidence type="ECO:0000269" key="12">
    <source>
    </source>
</evidence>
<evidence type="ECO:0000269" key="13">
    <source>
    </source>
</evidence>
<evidence type="ECO:0000305" key="14"/>
<evidence type="ECO:0007744" key="15">
    <source>
    </source>
</evidence>
<protein>
    <recommendedName>
        <fullName>Palladin</fullName>
    </recommendedName>
</protein>
<gene>
    <name type="primary">Palld</name>
</gene>
<sequence length="603" mass="66705">PEEICTLVIAESFPEDAGIFTCSARNDYGSVTSTAQLVVTSANTENCSYDSMGEPNSDHFQHFPPPPPILETGSYELASQKPSEIQQVNTPNLGFNMAALQMQFNSAERETNGVHPSHGVNGLINGKAYGNKSPPTPAALLSPTKEPPPLLAKPKLGFPKKASRTARIASDEEIQGTKDAVIQDLERKLRFKEDLLNNGQPRLTYEERMARRLLGADSANVFNIQEPEETAANQEYKVSSCEQRLISEIEYRLERSPVEESGDEVQEAEVPVENAAAPFFEMKLKHYKIFEGMPVTFTCRVAGSPKPKIYWFKDGKQISPKSDHYTIQRDVDGTCSLHTTASTLDDDGNYTIMAANTQGRVSCTGRLMVQAVNQRGRSPRSPPGHPHARRPRSRSRDSGDENEPIQERFFRPHFLQAPGDLTVQEGKLCRMDCKVSGLPTPDLSWQLDGKPIRPDSAHKMLVRENGVHSLIIEPVTSRDAGIYTCIATNRAGQNSFNLELVVAAKEAHKAPVFIEKLQNTGVADGYPVRLECRVSGVPPPQIFWKKENESLTHSTDRVSMHQDNHGYICLLIQGATKEDAGWYTVSAKNEAGIVSCTARLDVY</sequence>
<name>PALLD_RAT</name>
<dbReference type="EMBL" id="AC080188">
    <property type="status" value="NOT_ANNOTATED_CDS"/>
    <property type="molecule type" value="Genomic_DNA"/>
</dbReference>
<dbReference type="EMBL" id="AC084353">
    <property type="status" value="NOT_ANNOTATED_CDS"/>
    <property type="molecule type" value="Genomic_DNA"/>
</dbReference>
<dbReference type="EMBL" id="AC115538">
    <property type="status" value="NOT_ANNOTATED_CDS"/>
    <property type="molecule type" value="Genomic_DNA"/>
</dbReference>
<dbReference type="SMR" id="P0C5E3"/>
<dbReference type="GlyGen" id="P0C5E3">
    <property type="glycosylation" value="1 site"/>
</dbReference>
<dbReference type="iPTMnet" id="P0C5E3"/>
<dbReference type="PhosphoSitePlus" id="P0C5E3"/>
<dbReference type="PaxDb" id="10116-ENSRNOP00000059489"/>
<dbReference type="PeptideAtlas" id="P0C5E3"/>
<dbReference type="AGR" id="RGD:2322545"/>
<dbReference type="RGD" id="2322545">
    <property type="gene designation" value="Palld"/>
</dbReference>
<dbReference type="eggNOG" id="ENOG502QSRV">
    <property type="taxonomic scope" value="Eukaryota"/>
</dbReference>
<dbReference type="InParanoid" id="P0C5E3"/>
<dbReference type="PhylomeDB" id="P0C5E3"/>
<dbReference type="Proteomes" id="UP000002494">
    <property type="component" value="Unplaced"/>
</dbReference>
<dbReference type="GO" id="GO:0005884">
    <property type="term" value="C:actin filament"/>
    <property type="evidence" value="ECO:0000266"/>
    <property type="project" value="RGD"/>
</dbReference>
<dbReference type="GO" id="GO:0030424">
    <property type="term" value="C:axon"/>
    <property type="evidence" value="ECO:0000314"/>
    <property type="project" value="UniProtKB"/>
</dbReference>
<dbReference type="GO" id="GO:0044295">
    <property type="term" value="C:axonal growth cone"/>
    <property type="evidence" value="ECO:0000314"/>
    <property type="project" value="RGD"/>
</dbReference>
<dbReference type="GO" id="GO:0005856">
    <property type="term" value="C:cytoskeleton"/>
    <property type="evidence" value="ECO:0000314"/>
    <property type="project" value="UniProtKB"/>
</dbReference>
<dbReference type="GO" id="GO:0060076">
    <property type="term" value="C:excitatory synapse"/>
    <property type="evidence" value="ECO:0000314"/>
    <property type="project" value="UniProtKB"/>
</dbReference>
<dbReference type="GO" id="GO:0030175">
    <property type="term" value="C:filopodium"/>
    <property type="evidence" value="ECO:0000314"/>
    <property type="project" value="RGD"/>
</dbReference>
<dbReference type="GO" id="GO:0005925">
    <property type="term" value="C:focal adhesion"/>
    <property type="evidence" value="ECO:0000266"/>
    <property type="project" value="RGD"/>
</dbReference>
<dbReference type="GO" id="GO:0030426">
    <property type="term" value="C:growth cone"/>
    <property type="evidence" value="ECO:0000314"/>
    <property type="project" value="UniProtKB"/>
</dbReference>
<dbReference type="GO" id="GO:0030027">
    <property type="term" value="C:lamellipodium"/>
    <property type="evidence" value="ECO:0000266"/>
    <property type="project" value="RGD"/>
</dbReference>
<dbReference type="GO" id="GO:0043025">
    <property type="term" value="C:neuronal cell body"/>
    <property type="evidence" value="ECO:0000314"/>
    <property type="project" value="RGD"/>
</dbReference>
<dbReference type="GO" id="GO:0005634">
    <property type="term" value="C:nucleus"/>
    <property type="evidence" value="ECO:0000266"/>
    <property type="project" value="RGD"/>
</dbReference>
<dbReference type="GO" id="GO:0002102">
    <property type="term" value="C:podosome"/>
    <property type="evidence" value="ECO:0000314"/>
    <property type="project" value="RGD"/>
</dbReference>
<dbReference type="GO" id="GO:0001726">
    <property type="term" value="C:ruffle"/>
    <property type="evidence" value="ECO:0000314"/>
    <property type="project" value="RGD"/>
</dbReference>
<dbReference type="GO" id="GO:0001725">
    <property type="term" value="C:stress fiber"/>
    <property type="evidence" value="ECO:0000314"/>
    <property type="project" value="UniProtKB"/>
</dbReference>
<dbReference type="GO" id="GO:0030018">
    <property type="term" value="C:Z disc"/>
    <property type="evidence" value="ECO:0000314"/>
    <property type="project" value="UniProtKB"/>
</dbReference>
<dbReference type="GO" id="GO:0003779">
    <property type="term" value="F:actin binding"/>
    <property type="evidence" value="ECO:0007669"/>
    <property type="project" value="UniProtKB-KW"/>
</dbReference>
<dbReference type="GO" id="GO:0008092">
    <property type="term" value="F:cytoskeletal protein binding"/>
    <property type="evidence" value="ECO:0000353"/>
    <property type="project" value="RGD"/>
</dbReference>
<dbReference type="GO" id="GO:0030036">
    <property type="term" value="P:actin cytoskeleton organization"/>
    <property type="evidence" value="ECO:0000266"/>
    <property type="project" value="RGD"/>
</dbReference>
<dbReference type="GO" id="GO:0016477">
    <property type="term" value="P:cell migration"/>
    <property type="evidence" value="ECO:0007669"/>
    <property type="project" value="InterPro"/>
</dbReference>
<dbReference type="GO" id="GO:0071456">
    <property type="term" value="P:cellular response to hypoxia"/>
    <property type="evidence" value="ECO:0000270"/>
    <property type="project" value="RGD"/>
</dbReference>
<dbReference type="GO" id="GO:0003382">
    <property type="term" value="P:epithelial cell morphogenesis"/>
    <property type="evidence" value="ECO:0000266"/>
    <property type="project" value="RGD"/>
</dbReference>
<dbReference type="GO" id="GO:0003334">
    <property type="term" value="P:keratinocyte development"/>
    <property type="evidence" value="ECO:0000266"/>
    <property type="project" value="RGD"/>
</dbReference>
<dbReference type="GO" id="GO:0031175">
    <property type="term" value="P:neuron projection development"/>
    <property type="evidence" value="ECO:0000315"/>
    <property type="project" value="RGD"/>
</dbReference>
<dbReference type="GO" id="GO:0071803">
    <property type="term" value="P:positive regulation of podosome assembly"/>
    <property type="evidence" value="ECO:0000315"/>
    <property type="project" value="RGD"/>
</dbReference>
<dbReference type="GO" id="GO:0031529">
    <property type="term" value="P:ruffle organization"/>
    <property type="evidence" value="ECO:0000315"/>
    <property type="project" value="RGD"/>
</dbReference>
<dbReference type="GO" id="GO:0060707">
    <property type="term" value="P:trophoblast giant cell differentiation"/>
    <property type="evidence" value="ECO:0000270"/>
    <property type="project" value="RGD"/>
</dbReference>
<dbReference type="CDD" id="cd05893">
    <property type="entry name" value="IgI_1_Palladin_C"/>
    <property type="match status" value="1"/>
</dbReference>
<dbReference type="CDD" id="cd20990">
    <property type="entry name" value="IgI_2_Palladin_C"/>
    <property type="match status" value="1"/>
</dbReference>
<dbReference type="CDD" id="cd05892">
    <property type="entry name" value="IgI_Myotilin_C"/>
    <property type="match status" value="1"/>
</dbReference>
<dbReference type="FunFam" id="2.60.40.10:FF:001560">
    <property type="entry name" value="palladin isoform X1"/>
    <property type="match status" value="1"/>
</dbReference>
<dbReference type="FunFam" id="2.60.40.10:FF:000761">
    <property type="entry name" value="palladin isoform X2"/>
    <property type="match status" value="1"/>
</dbReference>
<dbReference type="FunFam" id="2.60.40.10:FF:001108">
    <property type="entry name" value="palladin isoform X2"/>
    <property type="match status" value="1"/>
</dbReference>
<dbReference type="Gene3D" id="2.60.40.10">
    <property type="entry name" value="Immunoglobulins"/>
    <property type="match status" value="4"/>
</dbReference>
<dbReference type="InterPro" id="IPR007110">
    <property type="entry name" value="Ig-like_dom"/>
</dbReference>
<dbReference type="InterPro" id="IPR036179">
    <property type="entry name" value="Ig-like_dom_sf"/>
</dbReference>
<dbReference type="InterPro" id="IPR013783">
    <property type="entry name" value="Ig-like_fold"/>
</dbReference>
<dbReference type="InterPro" id="IPR013098">
    <property type="entry name" value="Ig_I-set"/>
</dbReference>
<dbReference type="InterPro" id="IPR003599">
    <property type="entry name" value="Ig_sub"/>
</dbReference>
<dbReference type="InterPro" id="IPR003598">
    <property type="entry name" value="Ig_sub2"/>
</dbReference>
<dbReference type="InterPro" id="IPR033017">
    <property type="entry name" value="Palladin_C"/>
</dbReference>
<dbReference type="PANTHER" id="PTHR47633:SF16">
    <property type="entry name" value="CAVP-TARGET PROTEIN-LIKE"/>
    <property type="match status" value="1"/>
</dbReference>
<dbReference type="PANTHER" id="PTHR47633">
    <property type="entry name" value="IMMUNOGLOBULIN"/>
    <property type="match status" value="1"/>
</dbReference>
<dbReference type="Pfam" id="PF07679">
    <property type="entry name" value="I-set"/>
    <property type="match status" value="4"/>
</dbReference>
<dbReference type="SMART" id="SM00409">
    <property type="entry name" value="IG"/>
    <property type="match status" value="3"/>
</dbReference>
<dbReference type="SMART" id="SM00408">
    <property type="entry name" value="IGc2"/>
    <property type="match status" value="3"/>
</dbReference>
<dbReference type="SUPFAM" id="SSF48726">
    <property type="entry name" value="Immunoglobulin"/>
    <property type="match status" value="4"/>
</dbReference>
<dbReference type="PROSITE" id="PS50835">
    <property type="entry name" value="IG_LIKE"/>
    <property type="match status" value="3"/>
</dbReference>
<reference key="1">
    <citation type="journal article" date="2004" name="Nature">
        <title>Genome sequence of the Brown Norway rat yields insights into mammalian evolution.</title>
        <authorList>
            <person name="Gibbs R.A."/>
            <person name="Weinstock G.M."/>
            <person name="Metzker M.L."/>
            <person name="Muzny D.M."/>
            <person name="Sodergren E.J."/>
            <person name="Scherer S."/>
            <person name="Scott G."/>
            <person name="Steffen D."/>
            <person name="Worley K.C."/>
            <person name="Burch P.E."/>
            <person name="Okwuonu G."/>
            <person name="Hines S."/>
            <person name="Lewis L."/>
            <person name="Deramo C."/>
            <person name="Delgado O."/>
            <person name="Dugan-Rocha S."/>
            <person name="Miner G."/>
            <person name="Morgan M."/>
            <person name="Hawes A."/>
            <person name="Gill R."/>
            <person name="Holt R.A."/>
            <person name="Adams M.D."/>
            <person name="Amanatides P.G."/>
            <person name="Baden-Tillson H."/>
            <person name="Barnstead M."/>
            <person name="Chin S."/>
            <person name="Evans C.A."/>
            <person name="Ferriera S."/>
            <person name="Fosler C."/>
            <person name="Glodek A."/>
            <person name="Gu Z."/>
            <person name="Jennings D."/>
            <person name="Kraft C.L."/>
            <person name="Nguyen T."/>
            <person name="Pfannkoch C.M."/>
            <person name="Sitter C."/>
            <person name="Sutton G.G."/>
            <person name="Venter J.C."/>
            <person name="Woodage T."/>
            <person name="Smith D."/>
            <person name="Lee H.-M."/>
            <person name="Gustafson E."/>
            <person name="Cahill P."/>
            <person name="Kana A."/>
            <person name="Doucette-Stamm L."/>
            <person name="Weinstock K."/>
            <person name="Fechtel K."/>
            <person name="Weiss R.B."/>
            <person name="Dunn D.M."/>
            <person name="Green E.D."/>
            <person name="Blakesley R.W."/>
            <person name="Bouffard G.G."/>
            <person name="De Jong P.J."/>
            <person name="Osoegawa K."/>
            <person name="Zhu B."/>
            <person name="Marra M."/>
            <person name="Schein J."/>
            <person name="Bosdet I."/>
            <person name="Fjell C."/>
            <person name="Jones S."/>
            <person name="Krzywinski M."/>
            <person name="Mathewson C."/>
            <person name="Siddiqui A."/>
            <person name="Wye N."/>
            <person name="McPherson J."/>
            <person name="Zhao S."/>
            <person name="Fraser C.M."/>
            <person name="Shetty J."/>
            <person name="Shatsman S."/>
            <person name="Geer K."/>
            <person name="Chen Y."/>
            <person name="Abramzon S."/>
            <person name="Nierman W.C."/>
            <person name="Havlak P.H."/>
            <person name="Chen R."/>
            <person name="Durbin K.J."/>
            <person name="Egan A."/>
            <person name="Ren Y."/>
            <person name="Song X.-Z."/>
            <person name="Li B."/>
            <person name="Liu Y."/>
            <person name="Qin X."/>
            <person name="Cawley S."/>
            <person name="Cooney A.J."/>
            <person name="D'Souza L.M."/>
            <person name="Martin K."/>
            <person name="Wu J.Q."/>
            <person name="Gonzalez-Garay M.L."/>
            <person name="Jackson A.R."/>
            <person name="Kalafus K.J."/>
            <person name="McLeod M.P."/>
            <person name="Milosavljevic A."/>
            <person name="Virk D."/>
            <person name="Volkov A."/>
            <person name="Wheeler D.A."/>
            <person name="Zhang Z."/>
            <person name="Bailey J.A."/>
            <person name="Eichler E.E."/>
            <person name="Tuzun E."/>
            <person name="Birney E."/>
            <person name="Mongin E."/>
            <person name="Ureta-Vidal A."/>
            <person name="Woodwark C."/>
            <person name="Zdobnov E."/>
            <person name="Bork P."/>
            <person name="Suyama M."/>
            <person name="Torrents D."/>
            <person name="Alexandersson M."/>
            <person name="Trask B.J."/>
            <person name="Young J.M."/>
            <person name="Huang H."/>
            <person name="Wang H."/>
            <person name="Xing H."/>
            <person name="Daniels S."/>
            <person name="Gietzen D."/>
            <person name="Schmidt J."/>
            <person name="Stevens K."/>
            <person name="Vitt U."/>
            <person name="Wingrove J."/>
            <person name="Camara F."/>
            <person name="Mar Alba M."/>
            <person name="Abril J.F."/>
            <person name="Guigo R."/>
            <person name="Smit A."/>
            <person name="Dubchak I."/>
            <person name="Rubin E.M."/>
            <person name="Couronne O."/>
            <person name="Poliakov A."/>
            <person name="Huebner N."/>
            <person name="Ganten D."/>
            <person name="Goesele C."/>
            <person name="Hummel O."/>
            <person name="Kreitler T."/>
            <person name="Lee Y.-A."/>
            <person name="Monti J."/>
            <person name="Schulz H."/>
            <person name="Zimdahl H."/>
            <person name="Himmelbauer H."/>
            <person name="Lehrach H."/>
            <person name="Jacob H.J."/>
            <person name="Bromberg S."/>
            <person name="Gullings-Handley J."/>
            <person name="Jensen-Seaman M.I."/>
            <person name="Kwitek A.E."/>
            <person name="Lazar J."/>
            <person name="Pasko D."/>
            <person name="Tonellato P.J."/>
            <person name="Twigger S."/>
            <person name="Ponting C.P."/>
            <person name="Duarte J.M."/>
            <person name="Rice S."/>
            <person name="Goodstadt L."/>
            <person name="Beatson S.A."/>
            <person name="Emes R.D."/>
            <person name="Winter E.E."/>
            <person name="Webber C."/>
            <person name="Brandt P."/>
            <person name="Nyakatura G."/>
            <person name="Adetobi M."/>
            <person name="Chiaromonte F."/>
            <person name="Elnitski L."/>
            <person name="Eswara P."/>
            <person name="Hardison R.C."/>
            <person name="Hou M."/>
            <person name="Kolbe D."/>
            <person name="Makova K."/>
            <person name="Miller W."/>
            <person name="Nekrutenko A."/>
            <person name="Riemer C."/>
            <person name="Schwartz S."/>
            <person name="Taylor J."/>
            <person name="Yang S."/>
            <person name="Zhang Y."/>
            <person name="Lindpaintner K."/>
            <person name="Andrews T.D."/>
            <person name="Caccamo M."/>
            <person name="Clamp M."/>
            <person name="Clarke L."/>
            <person name="Curwen V."/>
            <person name="Durbin R.M."/>
            <person name="Eyras E."/>
            <person name="Searle S.M."/>
            <person name="Cooper G.M."/>
            <person name="Batzoglou S."/>
            <person name="Brudno M."/>
            <person name="Sidow A."/>
            <person name="Stone E.A."/>
            <person name="Payseur B.A."/>
            <person name="Bourque G."/>
            <person name="Lopez-Otin C."/>
            <person name="Puente X.S."/>
            <person name="Chakrabarti K."/>
            <person name="Chatterji S."/>
            <person name="Dewey C."/>
            <person name="Pachter L."/>
            <person name="Bray N."/>
            <person name="Yap V.B."/>
            <person name="Caspi A."/>
            <person name="Tesler G."/>
            <person name="Pevzner P.A."/>
            <person name="Haussler D."/>
            <person name="Roskin K.M."/>
            <person name="Baertsch R."/>
            <person name="Clawson H."/>
            <person name="Furey T.S."/>
            <person name="Hinrichs A.S."/>
            <person name="Karolchik D."/>
            <person name="Kent W.J."/>
            <person name="Rosenbloom K.R."/>
            <person name="Trumbower H."/>
            <person name="Weirauch M."/>
            <person name="Cooper D.N."/>
            <person name="Stenson P.D."/>
            <person name="Ma B."/>
            <person name="Brent M."/>
            <person name="Arumugam M."/>
            <person name="Shteynberg D."/>
            <person name="Copley R.R."/>
            <person name="Taylor M.S."/>
            <person name="Riethman H."/>
            <person name="Mudunuri U."/>
            <person name="Peterson J."/>
            <person name="Guyer M."/>
            <person name="Felsenfeld A."/>
            <person name="Old S."/>
            <person name="Mockrin S."/>
            <person name="Collins F.S."/>
        </authorList>
    </citation>
    <scope>NUCLEOTIDE SEQUENCE [LARGE SCALE GENOMIC DNA]</scope>
    <source>
        <strain>Brown Norway</strain>
    </source>
</reference>
<reference key="2">
    <citation type="journal article" date="2000" name="J. Cell Biol.">
        <title>Characterization of palladin, a novel protein localized to stress fibers and cell adhesions.</title>
        <authorList>
            <person name="Parast M.M."/>
            <person name="Otey C.A."/>
        </authorList>
    </citation>
    <scope>FUNCTION</scope>
</reference>
<reference key="3">
    <citation type="journal article" date="2001" name="J. Comp. Neurol.">
        <title>Palladin is expressed preferentially in excitatory terminals in the rat central nervous system.</title>
        <authorList>
            <person name="Hwang S.J."/>
            <person name="Pagliardini S."/>
            <person name="Boukhelifa M."/>
            <person name="Parast M.M."/>
            <person name="Otey C.A."/>
            <person name="Rustioni A."/>
            <person name="Valtschanoff J.G."/>
        </authorList>
    </citation>
    <scope>TISSUE SPECIFICITY</scope>
    <scope>SUBCELLULAR LOCATION</scope>
</reference>
<reference key="4">
    <citation type="journal article" date="2001" name="Mol. Biol. Cell">
        <title>A role for the cytoskeleton-associated protein palladin in neurite outgrowth.</title>
        <authorList>
            <person name="Boukhelifa M."/>
            <person name="Parast M.M."/>
            <person name="Valtschanoff J.G."/>
            <person name="LaMantia A.S."/>
            <person name="Meeker R.B."/>
            <person name="Otey C.A."/>
        </authorList>
    </citation>
    <scope>FUNCTION</scope>
    <scope>SUBCELLULAR LOCATION</scope>
    <scope>DEVELOPMENTAL STAGE</scope>
</reference>
<reference key="5">
    <citation type="journal article" date="2003" name="Mol. Cell. Neurosci.">
        <title>A critical role for palladin in astrocyte morphology and response to injury.</title>
        <authorList>
            <person name="Boukhelifa M."/>
            <person name="Hwang S.J."/>
            <person name="Valtschanoff J.G."/>
            <person name="Meeker R.B."/>
            <person name="Rustioni A."/>
            <person name="Otey C.A."/>
        </authorList>
    </citation>
    <scope>FUNCTION</scope>
    <scope>INDUCTION</scope>
</reference>
<reference key="6">
    <citation type="journal article" date="2005" name="Exp. Cell Res.">
        <title>Involvement of palladin and alpha-actinin in targeting of the Abl/Arg kinase adaptor ArgBP2 to the actin cytoskeleton.</title>
        <authorList>
            <person name="Roenty M."/>
            <person name="Taivainen A."/>
            <person name="Moza M."/>
            <person name="Kruh G.D."/>
            <person name="Ehler E."/>
            <person name="Carpen O."/>
        </authorList>
    </citation>
    <scope>SUBCELLULAR LOCATION</scope>
</reference>
<reference key="7">
    <citation type="journal article" date="2006" name="J. Cell Sci.">
        <title>Palladin binds to Eps8 and enhances the formation of dorsal ruffles and podosomes in vascular smooth muscle cells.</title>
        <authorList>
            <person name="Goicoechea S."/>
            <person name="Arneman D."/>
            <person name="Disanza A."/>
            <person name="Garcia-Mata R."/>
            <person name="Scita G."/>
            <person name="Otey C.A."/>
        </authorList>
    </citation>
    <scope>FUNCTION</scope>
    <scope>SUBCELLULAR LOCATION</scope>
    <scope>INDUCTION</scope>
</reference>
<reference key="8">
    <citation type="journal article" date="2012" name="Exp. Cell Res.">
        <title>CLP36 and RIL recruit alpha-actinin-1 to stress fibers and differentially regulate stress fiber dynamics in F2408 fibroblasts.</title>
        <authorList>
            <person name="Miyazaki K."/>
            <person name="Ohno K."/>
            <person name="Tamura N."/>
            <person name="Sasaki T."/>
            <person name="Sato K."/>
        </authorList>
    </citation>
    <scope>SUBCELLULAR LOCATION</scope>
</reference>
<reference key="9">
    <citation type="journal article" date="2012" name="Nat. Commun.">
        <title>Quantitative maps of protein phosphorylation sites across 14 different rat organs and tissues.</title>
        <authorList>
            <person name="Lundby A."/>
            <person name="Secher A."/>
            <person name="Lage K."/>
            <person name="Nordsborg N.B."/>
            <person name="Dmytriyev A."/>
            <person name="Lundby C."/>
            <person name="Olsen J.V."/>
        </authorList>
    </citation>
    <scope>PHOSPHORYLATION [LARGE SCALE ANALYSIS] AT SER-133; SER-170; SER-393 AND SER-398</scope>
    <scope>IDENTIFICATION BY MASS SPECTROMETRY [LARGE SCALE ANALYSIS]</scope>
</reference>
<reference key="10">
    <citation type="journal article" date="2013" name="PLoS ONE">
        <title>Rai14 (retinoic acid induced protein 14) is involved in regulating f-actin dynamics at the ectoplasmic specialization in the rat testis.</title>
        <authorList>
            <person name="Qian X."/>
            <person name="Mruk D.D."/>
            <person name="Cheng C.Y."/>
        </authorList>
    </citation>
    <scope>INTERACTION WITH RAI14</scope>
</reference>
<proteinExistence type="evidence at protein level"/>
<organism>
    <name type="scientific">Rattus norvegicus</name>
    <name type="common">Rat</name>
    <dbReference type="NCBI Taxonomy" id="10116"/>
    <lineage>
        <taxon>Eukaryota</taxon>
        <taxon>Metazoa</taxon>
        <taxon>Chordata</taxon>
        <taxon>Craniata</taxon>
        <taxon>Vertebrata</taxon>
        <taxon>Euteleostomi</taxon>
        <taxon>Mammalia</taxon>
        <taxon>Eutheria</taxon>
        <taxon>Euarchontoglires</taxon>
        <taxon>Glires</taxon>
        <taxon>Rodentia</taxon>
        <taxon>Myomorpha</taxon>
        <taxon>Muroidea</taxon>
        <taxon>Muridae</taxon>
        <taxon>Murinae</taxon>
        <taxon>Rattus</taxon>
    </lineage>
</organism>
<comment type="function">
    <text evidence="6 8 9 11">Cytoskeletal protein required for organization of normal actin cytoskeleton. Roles in establishing cell morphology, motility, cell adhesion and cell-extracellular matrix interactions in a variety of cell types. May function as a scaffolding molecule with the potential to influence both actin polymerization and the assembly of existing actin filaments into higher-order arrays. Binds to proteins that bind to either monomeric or filamentous actin. Localizes at sites where active actin remodeling takes place, such as lamellipodia and membrane ruffles. Different isoforms may have functional differences. Plays a role in neurite outgrowth and in the establishment of polarity during neuronal morphogenesis. Participates in the acquisition of the reactive astrocyte morphology.</text>
</comment>
<comment type="subunit">
    <text evidence="2 3 13">Interacts with EPS8 (By similarity). Interacts with LASP1 (By similarity). Interacts with VASP (By similarity). Interacts with ACTN (By similarity). Interacts with SORBS2 (By similarity). Interacts with PFN1 (By similarity). Interacts with LPP (By similarity). Interacts with SPIN90 (By similarity). Interacts with SRC (By similarity). Interacts with EZR (By similarity). Interacts with RAI14 (PubMed:23565266).</text>
</comment>
<comment type="subcellular location">
    <subcellularLocation>
        <location evidence="10 11">Cytoplasm</location>
        <location evidence="10 11">Cytoskeleton</location>
    </subcellularLocation>
    <subcellularLocation>
        <location evidence="2">Cell junction</location>
        <location evidence="2">Focal adhesion</location>
    </subcellularLocation>
    <subcellularLocation>
        <location evidence="8 10">Cytoplasm</location>
        <location evidence="8 10">Myofibril</location>
        <location evidence="8 10">Sarcomere</location>
        <location evidence="8 10">Z line</location>
    </subcellularLocation>
    <subcellularLocation>
        <location evidence="11">Cell projection</location>
        <location evidence="11">Ruffle</location>
    </subcellularLocation>
    <subcellularLocation>
        <location evidence="11">Cell projection</location>
        <location evidence="11">Podosome</location>
    </subcellularLocation>
    <subcellularLocation>
        <location evidence="2">Cell projection</location>
        <location evidence="2">Lamellipodium</location>
    </subcellularLocation>
    <subcellularLocation>
        <location evidence="7 8">Cell projection</location>
        <location evidence="7 8">Axon</location>
    </subcellularLocation>
    <subcellularLocation>
        <location evidence="7 8">Cell projection</location>
        <location evidence="7 8">Growth cone</location>
    </subcellularLocation>
    <text evidence="7 8 10 11 12">Localizes to stress fibers (PubMed:11553711, PubMed:16125169, PubMed:16868024, PubMed:22659164). Localizes to Z lines (PubMed:11553711, PubMed:16125169, PubMed:16868024). Preferentially expressed in the excitatory presynaptic terminals (PubMed:11438925).</text>
</comment>
<comment type="tissue specificity">
    <text evidence="7">In adult central nervous system is detected in the brain and spinal cord, specially in the olfactory bulb, cerebral and cerebellar cortices, hippocampus, amygdala, superior colluculus, and superficial laminae of the spinal dorsal horn.</text>
</comment>
<comment type="developmental stage">
    <text evidence="8">Early expressed in the axonal compartment in developing neurons, and persists in this polarized distribution in the adult brain.</text>
</comment>
<comment type="induction">
    <text evidence="9 11">Up-regulated rapidly and persistently in astrocytes in response to injury.</text>
</comment>
<comment type="PTM">
    <text evidence="1">Phosphorylated predominantly on serines and, to a lesser extent, on tyrosines. Phosphorylation at Ser-395 by PKB/AKT1 modulates cytoskeletal organization and cell motility (By similarity).</text>
</comment>
<comment type="similarity">
    <text evidence="14">Belongs to the myotilin/palladin family.</text>
</comment>
<accession>P0C5E3</accession>